<evidence type="ECO:0000255" key="1">
    <source>
        <dbReference type="HAMAP-Rule" id="MF_00017"/>
    </source>
</evidence>
<sequence length="198" mass="21689">MLYPTPIAKLIDSYSKLPGIGIKTATRLAFYTIGMSADDVNEFAKNLLSAKRELTYCSICGRLTDDDPCSICTDPTRDQTTILVLEDSRDVAAMENIQEYHGLYHVLHGLISPMNGISPDDINLKSLMTRLMDSEVSEVIVATNATADGEATSMYLSRLLKPAGIKVTRLARGLAVGADIEYADEVTLLRAIENRTEL</sequence>
<proteinExistence type="inferred from homology"/>
<reference key="1">
    <citation type="journal article" date="2009" name="BMC Genomics">
        <title>Genome evolution driven by host adaptations results in a more virulent and antimicrobial-resistant Streptococcus pneumoniae serotype 14.</title>
        <authorList>
            <person name="Ding F."/>
            <person name="Tang P."/>
            <person name="Hsu M.-H."/>
            <person name="Cui P."/>
            <person name="Hu S."/>
            <person name="Yu J."/>
            <person name="Chiu C.-H."/>
        </authorList>
    </citation>
    <scope>NUCLEOTIDE SEQUENCE [LARGE SCALE GENOMIC DNA]</scope>
    <source>
        <strain>CGSP14</strain>
    </source>
</reference>
<protein>
    <recommendedName>
        <fullName evidence="1">Recombination protein RecR</fullName>
    </recommendedName>
</protein>
<name>RECR_STRPS</name>
<dbReference type="EMBL" id="CP001033">
    <property type="protein sequence ID" value="ACB90896.1"/>
    <property type="molecule type" value="Genomic_DNA"/>
</dbReference>
<dbReference type="RefSeq" id="WP_000966743.1">
    <property type="nucleotide sequence ID" value="NC_010582.1"/>
</dbReference>
<dbReference type="SMR" id="B2IRS7"/>
<dbReference type="GeneID" id="45653117"/>
<dbReference type="KEGG" id="spw:SPCG_1644"/>
<dbReference type="HOGENOM" id="CLU_060739_1_0_9"/>
<dbReference type="GO" id="GO:0003677">
    <property type="term" value="F:DNA binding"/>
    <property type="evidence" value="ECO:0007669"/>
    <property type="project" value="UniProtKB-UniRule"/>
</dbReference>
<dbReference type="GO" id="GO:0008270">
    <property type="term" value="F:zinc ion binding"/>
    <property type="evidence" value="ECO:0007669"/>
    <property type="project" value="UniProtKB-KW"/>
</dbReference>
<dbReference type="GO" id="GO:0006310">
    <property type="term" value="P:DNA recombination"/>
    <property type="evidence" value="ECO:0007669"/>
    <property type="project" value="UniProtKB-UniRule"/>
</dbReference>
<dbReference type="GO" id="GO:0006281">
    <property type="term" value="P:DNA repair"/>
    <property type="evidence" value="ECO:0007669"/>
    <property type="project" value="UniProtKB-UniRule"/>
</dbReference>
<dbReference type="CDD" id="cd01025">
    <property type="entry name" value="TOPRIM_recR"/>
    <property type="match status" value="1"/>
</dbReference>
<dbReference type="Gene3D" id="3.30.60.80">
    <property type="match status" value="1"/>
</dbReference>
<dbReference type="Gene3D" id="3.40.1360.10">
    <property type="match status" value="1"/>
</dbReference>
<dbReference type="Gene3D" id="6.10.250.240">
    <property type="match status" value="1"/>
</dbReference>
<dbReference type="Gene3D" id="1.10.8.420">
    <property type="entry name" value="RecR Domain 1"/>
    <property type="match status" value="1"/>
</dbReference>
<dbReference type="HAMAP" id="MF_00017">
    <property type="entry name" value="RecR"/>
    <property type="match status" value="1"/>
</dbReference>
<dbReference type="InterPro" id="IPR000093">
    <property type="entry name" value="DNA_Rcmb_RecR"/>
</dbReference>
<dbReference type="InterPro" id="IPR023627">
    <property type="entry name" value="Rcmb_RecR"/>
</dbReference>
<dbReference type="InterPro" id="IPR015967">
    <property type="entry name" value="Rcmb_RecR_Znf"/>
</dbReference>
<dbReference type="InterPro" id="IPR006171">
    <property type="entry name" value="TOPRIM_dom"/>
</dbReference>
<dbReference type="InterPro" id="IPR034137">
    <property type="entry name" value="TOPRIM_RecR"/>
</dbReference>
<dbReference type="NCBIfam" id="TIGR00615">
    <property type="entry name" value="recR"/>
    <property type="match status" value="1"/>
</dbReference>
<dbReference type="PANTHER" id="PTHR30446">
    <property type="entry name" value="RECOMBINATION PROTEIN RECR"/>
    <property type="match status" value="1"/>
</dbReference>
<dbReference type="PANTHER" id="PTHR30446:SF0">
    <property type="entry name" value="RECOMBINATION PROTEIN RECR"/>
    <property type="match status" value="1"/>
</dbReference>
<dbReference type="Pfam" id="PF21175">
    <property type="entry name" value="RecR_C"/>
    <property type="match status" value="1"/>
</dbReference>
<dbReference type="Pfam" id="PF21176">
    <property type="entry name" value="RecR_HhH"/>
    <property type="match status" value="1"/>
</dbReference>
<dbReference type="Pfam" id="PF02132">
    <property type="entry name" value="RecR_ZnF"/>
    <property type="match status" value="1"/>
</dbReference>
<dbReference type="Pfam" id="PF13662">
    <property type="entry name" value="Toprim_4"/>
    <property type="match status" value="1"/>
</dbReference>
<dbReference type="SMART" id="SM00493">
    <property type="entry name" value="TOPRIM"/>
    <property type="match status" value="1"/>
</dbReference>
<dbReference type="SUPFAM" id="SSF111304">
    <property type="entry name" value="Recombination protein RecR"/>
    <property type="match status" value="1"/>
</dbReference>
<dbReference type="PROSITE" id="PS01300">
    <property type="entry name" value="RECR"/>
    <property type="match status" value="1"/>
</dbReference>
<dbReference type="PROSITE" id="PS50880">
    <property type="entry name" value="TOPRIM"/>
    <property type="match status" value="1"/>
</dbReference>
<organism>
    <name type="scientific">Streptococcus pneumoniae (strain CGSP14)</name>
    <dbReference type="NCBI Taxonomy" id="516950"/>
    <lineage>
        <taxon>Bacteria</taxon>
        <taxon>Bacillati</taxon>
        <taxon>Bacillota</taxon>
        <taxon>Bacilli</taxon>
        <taxon>Lactobacillales</taxon>
        <taxon>Streptococcaceae</taxon>
        <taxon>Streptococcus</taxon>
    </lineage>
</organism>
<comment type="function">
    <text evidence="1">May play a role in DNA repair. It seems to be involved in an RecBC-independent recombinational process of DNA repair. It may act with RecF and RecO.</text>
</comment>
<comment type="similarity">
    <text evidence="1">Belongs to the RecR family.</text>
</comment>
<accession>B2IRS7</accession>
<gene>
    <name evidence="1" type="primary">recR</name>
    <name type="ordered locus">SPCG_1644</name>
</gene>
<keyword id="KW-0227">DNA damage</keyword>
<keyword id="KW-0233">DNA recombination</keyword>
<keyword id="KW-0234">DNA repair</keyword>
<keyword id="KW-0479">Metal-binding</keyword>
<keyword id="KW-0862">Zinc</keyword>
<keyword id="KW-0863">Zinc-finger</keyword>
<feature type="chain" id="PRO_1000089775" description="Recombination protein RecR">
    <location>
        <begin position="1"/>
        <end position="198"/>
    </location>
</feature>
<feature type="domain" description="Toprim" evidence="1">
    <location>
        <begin position="80"/>
        <end position="175"/>
    </location>
</feature>
<feature type="zinc finger region" description="C4-type" evidence="1">
    <location>
        <begin position="57"/>
        <end position="72"/>
    </location>
</feature>